<sequence length="242" mass="25942">MRFFHFYTPEQVPSSGIPECAVAIDVLRATTTIATALAAGAEAVQVFAHLQQLQEASQNWPASQRLLAGERGGKAVAGFDLGNSPLDYTPDRVRDKRIFLSTTNGTRSLQRLEGIPVVITAALVNLGAVVDFLRRGSFAEVWLVGSGWEGAFSLEDTACAGAILHRLGCSLNQLGNDETLAALALYQTWQDDLLGLLRRSSHGQRLLGLGPENDQDLAYCADLDRLSVVPRQVQPGVLASGG</sequence>
<accession>Q2JPJ7</accession>
<comment type="catalytic activity">
    <reaction evidence="1">
        <text>(2R)-O-phospho-3-sulfolactate + H2O = (2R)-3-sulfolactate + phosphate</text>
        <dbReference type="Rhea" id="RHEA:23416"/>
        <dbReference type="ChEBI" id="CHEBI:15377"/>
        <dbReference type="ChEBI" id="CHEBI:15597"/>
        <dbReference type="ChEBI" id="CHEBI:43474"/>
        <dbReference type="ChEBI" id="CHEBI:58738"/>
        <dbReference type="EC" id="3.1.3.71"/>
    </reaction>
</comment>
<comment type="cofactor">
    <cofactor evidence="1">
        <name>Mg(2+)</name>
        <dbReference type="ChEBI" id="CHEBI:18420"/>
    </cofactor>
</comment>
<comment type="similarity">
    <text evidence="1">Belongs to the ComB family.</text>
</comment>
<reference key="1">
    <citation type="journal article" date="2007" name="ISME J.">
        <title>Population level functional diversity in a microbial community revealed by comparative genomic and metagenomic analyses.</title>
        <authorList>
            <person name="Bhaya D."/>
            <person name="Grossman A.R."/>
            <person name="Steunou A.-S."/>
            <person name="Khuri N."/>
            <person name="Cohan F.M."/>
            <person name="Hamamura N."/>
            <person name="Melendrez M.C."/>
            <person name="Bateson M.M."/>
            <person name="Ward D.M."/>
            <person name="Heidelberg J.F."/>
        </authorList>
    </citation>
    <scope>NUCLEOTIDE SEQUENCE [LARGE SCALE GENOMIC DNA]</scope>
    <source>
        <strain>JA-2-3B'a(2-13)</strain>
    </source>
</reference>
<proteinExistence type="inferred from homology"/>
<feature type="chain" id="PRO_1000014470" description="Probable 2-phosphosulfolactate phosphatase">
    <location>
        <begin position="1"/>
        <end position="242"/>
    </location>
</feature>
<protein>
    <recommendedName>
        <fullName evidence="1">Probable 2-phosphosulfolactate phosphatase</fullName>
        <ecNumber evidence="1">3.1.3.71</ecNumber>
    </recommendedName>
</protein>
<dbReference type="EC" id="3.1.3.71" evidence="1"/>
<dbReference type="EMBL" id="CP000240">
    <property type="protein sequence ID" value="ABD01285.1"/>
    <property type="molecule type" value="Genomic_DNA"/>
</dbReference>
<dbReference type="RefSeq" id="WP_011431954.1">
    <property type="nucleotide sequence ID" value="NC_007776.1"/>
</dbReference>
<dbReference type="SMR" id="Q2JPJ7"/>
<dbReference type="STRING" id="321332.CYB_0287"/>
<dbReference type="KEGG" id="cyb:CYB_0287"/>
<dbReference type="eggNOG" id="COG2045">
    <property type="taxonomic scope" value="Bacteria"/>
</dbReference>
<dbReference type="HOGENOM" id="CLU_070028_0_1_3"/>
<dbReference type="OrthoDB" id="4913at2"/>
<dbReference type="Proteomes" id="UP000001938">
    <property type="component" value="Chromosome"/>
</dbReference>
<dbReference type="GO" id="GO:0050532">
    <property type="term" value="F:2-phosphosulfolactate phosphatase activity"/>
    <property type="evidence" value="ECO:0007669"/>
    <property type="project" value="UniProtKB-UniRule"/>
</dbReference>
<dbReference type="GO" id="GO:0000287">
    <property type="term" value="F:magnesium ion binding"/>
    <property type="evidence" value="ECO:0007669"/>
    <property type="project" value="UniProtKB-UniRule"/>
</dbReference>
<dbReference type="GO" id="GO:0050545">
    <property type="term" value="F:sulfopyruvate decarboxylase activity"/>
    <property type="evidence" value="ECO:0007669"/>
    <property type="project" value="TreeGrafter"/>
</dbReference>
<dbReference type="FunFam" id="3.90.1560.10:FF:000001">
    <property type="entry name" value="Probable 2-phosphosulfolactate phosphatase"/>
    <property type="match status" value="1"/>
</dbReference>
<dbReference type="Gene3D" id="3.90.1560.10">
    <property type="entry name" value="ComB-like"/>
    <property type="match status" value="1"/>
</dbReference>
<dbReference type="HAMAP" id="MF_00490">
    <property type="entry name" value="ComB"/>
    <property type="match status" value="1"/>
</dbReference>
<dbReference type="InterPro" id="IPR005238">
    <property type="entry name" value="ComB-like"/>
</dbReference>
<dbReference type="InterPro" id="IPR036702">
    <property type="entry name" value="ComB-like_sf"/>
</dbReference>
<dbReference type="NCBIfam" id="NF002056">
    <property type="entry name" value="PRK00886.1-5"/>
    <property type="match status" value="1"/>
</dbReference>
<dbReference type="PANTHER" id="PTHR37311">
    <property type="entry name" value="2-PHOSPHOSULFOLACTATE PHOSPHATASE-RELATED"/>
    <property type="match status" value="1"/>
</dbReference>
<dbReference type="PANTHER" id="PTHR37311:SF1">
    <property type="entry name" value="2-PHOSPHOSULFOLACTATE PHOSPHATASE-RELATED"/>
    <property type="match status" value="1"/>
</dbReference>
<dbReference type="Pfam" id="PF04029">
    <property type="entry name" value="2-ph_phosp"/>
    <property type="match status" value="1"/>
</dbReference>
<dbReference type="SUPFAM" id="SSF142823">
    <property type="entry name" value="ComB-like"/>
    <property type="match status" value="1"/>
</dbReference>
<name>COMB_SYNJB</name>
<gene>
    <name evidence="1" type="primary">comB</name>
    <name type="ordered locus">CYB_0287</name>
</gene>
<evidence type="ECO:0000255" key="1">
    <source>
        <dbReference type="HAMAP-Rule" id="MF_00490"/>
    </source>
</evidence>
<organism>
    <name type="scientific">Synechococcus sp. (strain JA-2-3B'a(2-13))</name>
    <name type="common">Cyanobacteria bacterium Yellowstone B-Prime</name>
    <dbReference type="NCBI Taxonomy" id="321332"/>
    <lineage>
        <taxon>Bacteria</taxon>
        <taxon>Bacillati</taxon>
        <taxon>Cyanobacteriota</taxon>
        <taxon>Cyanophyceae</taxon>
        <taxon>Synechococcales</taxon>
        <taxon>Synechococcaceae</taxon>
        <taxon>Synechococcus</taxon>
    </lineage>
</organism>
<keyword id="KW-0378">Hydrolase</keyword>
<keyword id="KW-0460">Magnesium</keyword>
<keyword id="KW-1185">Reference proteome</keyword>